<organism>
    <name type="scientific">Synechococcus elongatus (strain ATCC 33912 / PCC 7942 / FACHB-805)</name>
    <name type="common">Anacystis nidulans R2</name>
    <dbReference type="NCBI Taxonomy" id="1140"/>
    <lineage>
        <taxon>Bacteria</taxon>
        <taxon>Bacillati</taxon>
        <taxon>Cyanobacteriota</taxon>
        <taxon>Cyanophyceae</taxon>
        <taxon>Synechococcales</taxon>
        <taxon>Synechococcaceae</taxon>
        <taxon>Synechococcus</taxon>
    </lineage>
</organism>
<protein>
    <recommendedName>
        <fullName evidence="1">Sulfate adenylyltransferase</fullName>
        <ecNumber evidence="1">2.7.7.4</ecNumber>
    </recommendedName>
    <alternativeName>
        <fullName evidence="1">ATP-sulfurylase</fullName>
    </alternativeName>
    <alternativeName>
        <fullName evidence="1">Sulfate adenylate transferase</fullName>
        <shortName evidence="1">SAT</shortName>
    </alternativeName>
</protein>
<dbReference type="EC" id="2.7.7.4" evidence="1"/>
<dbReference type="EMBL" id="CP000100">
    <property type="protein sequence ID" value="ABB56327.1"/>
    <property type="molecule type" value="Genomic_DNA"/>
</dbReference>
<dbReference type="RefSeq" id="WP_011243529.1">
    <property type="nucleotide sequence ID" value="NZ_JACJTX010000002.1"/>
</dbReference>
<dbReference type="SMR" id="Q31RJ2"/>
<dbReference type="STRING" id="1140.Synpcc7942_0295"/>
<dbReference type="PaxDb" id="1140-Synpcc7942_0295"/>
<dbReference type="GeneID" id="72429111"/>
<dbReference type="KEGG" id="syf:Synpcc7942_0295"/>
<dbReference type="eggNOG" id="COG2046">
    <property type="taxonomic scope" value="Bacteria"/>
</dbReference>
<dbReference type="HOGENOM" id="CLU_022950_1_1_3"/>
<dbReference type="OrthoDB" id="9804504at2"/>
<dbReference type="BioCyc" id="SYNEL:SYNPCC7942_0295-MONOMER"/>
<dbReference type="UniPathway" id="UPA00140">
    <property type="reaction ID" value="UER00204"/>
</dbReference>
<dbReference type="Proteomes" id="UP000889800">
    <property type="component" value="Chromosome"/>
</dbReference>
<dbReference type="GO" id="GO:0005524">
    <property type="term" value="F:ATP binding"/>
    <property type="evidence" value="ECO:0007669"/>
    <property type="project" value="UniProtKB-KW"/>
</dbReference>
<dbReference type="GO" id="GO:0004781">
    <property type="term" value="F:sulfate adenylyltransferase (ATP) activity"/>
    <property type="evidence" value="ECO:0007669"/>
    <property type="project" value="UniProtKB-UniRule"/>
</dbReference>
<dbReference type="GO" id="GO:0070814">
    <property type="term" value="P:hydrogen sulfide biosynthetic process"/>
    <property type="evidence" value="ECO:0007669"/>
    <property type="project" value="UniProtKB-UniRule"/>
</dbReference>
<dbReference type="GO" id="GO:0000103">
    <property type="term" value="P:sulfate assimilation"/>
    <property type="evidence" value="ECO:0007669"/>
    <property type="project" value="UniProtKB-UniRule"/>
</dbReference>
<dbReference type="CDD" id="cd00517">
    <property type="entry name" value="ATPS"/>
    <property type="match status" value="1"/>
</dbReference>
<dbReference type="Gene3D" id="3.40.50.620">
    <property type="entry name" value="HUPs"/>
    <property type="match status" value="1"/>
</dbReference>
<dbReference type="Gene3D" id="3.10.400.10">
    <property type="entry name" value="Sulfate adenylyltransferase"/>
    <property type="match status" value="1"/>
</dbReference>
<dbReference type="HAMAP" id="MF_00066">
    <property type="entry name" value="Sulf_adenylyltr"/>
    <property type="match status" value="1"/>
</dbReference>
<dbReference type="InterPro" id="IPR025980">
    <property type="entry name" value="ATP-Sase_PUA-like_dom"/>
</dbReference>
<dbReference type="InterPro" id="IPR015947">
    <property type="entry name" value="PUA-like_sf"/>
</dbReference>
<dbReference type="InterPro" id="IPR014729">
    <property type="entry name" value="Rossmann-like_a/b/a_fold"/>
</dbReference>
<dbReference type="InterPro" id="IPR020792">
    <property type="entry name" value="SO4_adenylyltransferase_pro"/>
</dbReference>
<dbReference type="InterPro" id="IPR024951">
    <property type="entry name" value="Sulfurylase_cat_dom"/>
</dbReference>
<dbReference type="InterPro" id="IPR002650">
    <property type="entry name" value="Sulphate_adenylyltransferase"/>
</dbReference>
<dbReference type="NCBIfam" id="NF003166">
    <property type="entry name" value="PRK04149.1"/>
    <property type="match status" value="1"/>
</dbReference>
<dbReference type="NCBIfam" id="TIGR00339">
    <property type="entry name" value="sopT"/>
    <property type="match status" value="1"/>
</dbReference>
<dbReference type="PANTHER" id="PTHR43509">
    <property type="match status" value="1"/>
</dbReference>
<dbReference type="PANTHER" id="PTHR43509:SF1">
    <property type="entry name" value="SULFATE ADENYLYLTRANSFERASE"/>
    <property type="match status" value="1"/>
</dbReference>
<dbReference type="Pfam" id="PF01747">
    <property type="entry name" value="ATP-sulfurylase"/>
    <property type="match status" value="1"/>
</dbReference>
<dbReference type="Pfam" id="PF14306">
    <property type="entry name" value="PUA_2"/>
    <property type="match status" value="1"/>
</dbReference>
<dbReference type="SUPFAM" id="SSF52374">
    <property type="entry name" value="Nucleotidylyl transferase"/>
    <property type="match status" value="1"/>
</dbReference>
<dbReference type="SUPFAM" id="SSF88697">
    <property type="entry name" value="PUA domain-like"/>
    <property type="match status" value="1"/>
</dbReference>
<accession>Q31RJ2</accession>
<name>SAT_SYNE7</name>
<gene>
    <name evidence="1" type="primary">sat</name>
    <name type="ordered locus">Synpcc7942_0295</name>
</gene>
<reference key="1">
    <citation type="submission" date="2005-08" db="EMBL/GenBank/DDBJ databases">
        <title>Complete sequence of chromosome 1 of Synechococcus elongatus PCC 7942.</title>
        <authorList>
            <consortium name="US DOE Joint Genome Institute"/>
            <person name="Copeland A."/>
            <person name="Lucas S."/>
            <person name="Lapidus A."/>
            <person name="Barry K."/>
            <person name="Detter J.C."/>
            <person name="Glavina T."/>
            <person name="Hammon N."/>
            <person name="Israni S."/>
            <person name="Pitluck S."/>
            <person name="Schmutz J."/>
            <person name="Larimer F."/>
            <person name="Land M."/>
            <person name="Kyrpides N."/>
            <person name="Lykidis A."/>
            <person name="Golden S."/>
            <person name="Richardson P."/>
        </authorList>
    </citation>
    <scope>NUCLEOTIDE SEQUENCE [LARGE SCALE GENOMIC DNA]</scope>
    <source>
        <strain>ATCC 33912 / PCC 7942 / FACHB-805</strain>
    </source>
</reference>
<comment type="catalytic activity">
    <reaction evidence="1">
        <text>sulfate + ATP + H(+) = adenosine 5'-phosphosulfate + diphosphate</text>
        <dbReference type="Rhea" id="RHEA:18133"/>
        <dbReference type="ChEBI" id="CHEBI:15378"/>
        <dbReference type="ChEBI" id="CHEBI:16189"/>
        <dbReference type="ChEBI" id="CHEBI:30616"/>
        <dbReference type="ChEBI" id="CHEBI:33019"/>
        <dbReference type="ChEBI" id="CHEBI:58243"/>
        <dbReference type="EC" id="2.7.7.4"/>
    </reaction>
</comment>
<comment type="pathway">
    <text evidence="1">Sulfur metabolism; hydrogen sulfide biosynthesis; sulfite from sulfate: step 1/3.</text>
</comment>
<comment type="similarity">
    <text evidence="1">Belongs to the sulfate adenylyltransferase family.</text>
</comment>
<feature type="chain" id="PRO_0000340636" description="Sulfate adenylyltransferase">
    <location>
        <begin position="1"/>
        <end position="395"/>
    </location>
</feature>
<keyword id="KW-0067">ATP-binding</keyword>
<keyword id="KW-0547">Nucleotide-binding</keyword>
<keyword id="KW-0548">Nucleotidyltransferase</keyword>
<keyword id="KW-1185">Reference proteome</keyword>
<keyword id="KW-0808">Transferase</keyword>
<proteinExistence type="inferred from homology"/>
<sequence>MTQVVPGIAPHGGQLIQRIATAAERQEFLAQADHLPRVQLDERALSDLVMIAIGGFSPLNGFMGQTDYESVVDDMRLANGLPWSVPITLSVTEEVAEPLKEGGWVRLDDAQGRFVGVLELTQKYRYNKVHEATNVYRTDEEQHPGVAVVYAQGPINLAGPIWLLQRDAHPLFPSYQIDPIASRQQFADRGWKTVVGFQTRNPIHRAHEYIIKCALETVDGLFLHPLVGATKSDDIPADVRMRCYEIMLEHYFPQDRVILAINPSAMRYAGPREAIFHALIRKNYGCTHFIVGRDHAGVGNYYGTYDAQHLFDEFKPEELGILPMKFEHAFYCTRTQAMASTKTSPSSPEERIHLSGTKVRELLRKGELPPPEFSRPEVAAELIRAMRSDSEVAAV</sequence>
<evidence type="ECO:0000255" key="1">
    <source>
        <dbReference type="HAMAP-Rule" id="MF_00066"/>
    </source>
</evidence>